<feature type="chain" id="PRO_0000275266" description="Light-independent protochlorophyllide reductase iron-sulfur ATP-binding protein">
    <location>
        <begin position="1"/>
        <end position="290"/>
    </location>
</feature>
<feature type="binding site" evidence="1">
    <location>
        <begin position="10"/>
        <end position="15"/>
    </location>
    <ligand>
        <name>ATP</name>
        <dbReference type="ChEBI" id="CHEBI:30616"/>
    </ligand>
</feature>
<feature type="binding site" evidence="1">
    <location>
        <position position="14"/>
    </location>
    <ligand>
        <name>Mg(2+)</name>
        <dbReference type="ChEBI" id="CHEBI:18420"/>
    </ligand>
</feature>
<feature type="binding site" evidence="1">
    <location>
        <position position="39"/>
    </location>
    <ligand>
        <name>ATP</name>
        <dbReference type="ChEBI" id="CHEBI:30616"/>
    </ligand>
</feature>
<feature type="binding site" evidence="1">
    <location>
        <position position="95"/>
    </location>
    <ligand>
        <name>[4Fe-4S] cluster</name>
        <dbReference type="ChEBI" id="CHEBI:49883"/>
        <note>ligand shared between dimeric partners</note>
    </ligand>
</feature>
<feature type="binding site" evidence="1">
    <location>
        <position position="129"/>
    </location>
    <ligand>
        <name>[4Fe-4S] cluster</name>
        <dbReference type="ChEBI" id="CHEBI:49883"/>
        <note>ligand shared between dimeric partners</note>
    </ligand>
</feature>
<feature type="binding site" evidence="1">
    <location>
        <begin position="180"/>
        <end position="181"/>
    </location>
    <ligand>
        <name>ATP</name>
        <dbReference type="ChEBI" id="CHEBI:30616"/>
    </ligand>
</feature>
<keyword id="KW-0004">4Fe-4S</keyword>
<keyword id="KW-0067">ATP-binding</keyword>
<keyword id="KW-0149">Chlorophyll biosynthesis</keyword>
<keyword id="KW-0150">Chloroplast</keyword>
<keyword id="KW-0408">Iron</keyword>
<keyword id="KW-0411">Iron-sulfur</keyword>
<keyword id="KW-0460">Magnesium</keyword>
<keyword id="KW-0479">Metal-binding</keyword>
<keyword id="KW-0547">Nucleotide-binding</keyword>
<keyword id="KW-0560">Oxidoreductase</keyword>
<keyword id="KW-0602">Photosynthesis</keyword>
<keyword id="KW-0934">Plastid</keyword>
<name>CHLL_PYRYE</name>
<accession>Q1XDV0</accession>
<geneLocation type="chloroplast"/>
<dbReference type="EC" id="1.3.7.7" evidence="1"/>
<dbReference type="EMBL" id="AP006715">
    <property type="protein sequence ID" value="BAE92311.1"/>
    <property type="molecule type" value="Genomic_DNA"/>
</dbReference>
<dbReference type="RefSeq" id="YP_536868.1">
    <property type="nucleotide sequence ID" value="NC_007932.1"/>
</dbReference>
<dbReference type="SMR" id="Q1XDV0"/>
<dbReference type="GeneID" id="3978844"/>
<dbReference type="UniPathway" id="UPA00670"/>
<dbReference type="GO" id="GO:0009507">
    <property type="term" value="C:chloroplast"/>
    <property type="evidence" value="ECO:0007669"/>
    <property type="project" value="UniProtKB-SubCell"/>
</dbReference>
<dbReference type="GO" id="GO:0051539">
    <property type="term" value="F:4 iron, 4 sulfur cluster binding"/>
    <property type="evidence" value="ECO:0007669"/>
    <property type="project" value="UniProtKB-UniRule"/>
</dbReference>
<dbReference type="GO" id="GO:0005524">
    <property type="term" value="F:ATP binding"/>
    <property type="evidence" value="ECO:0007669"/>
    <property type="project" value="UniProtKB-UniRule"/>
</dbReference>
<dbReference type="GO" id="GO:0046872">
    <property type="term" value="F:metal ion binding"/>
    <property type="evidence" value="ECO:0007669"/>
    <property type="project" value="UniProtKB-KW"/>
</dbReference>
<dbReference type="GO" id="GO:0016730">
    <property type="term" value="F:oxidoreductase activity, acting on iron-sulfur proteins as donors"/>
    <property type="evidence" value="ECO:0007669"/>
    <property type="project" value="InterPro"/>
</dbReference>
<dbReference type="GO" id="GO:0016636">
    <property type="term" value="F:oxidoreductase activity, acting on the CH-CH group of donors, iron-sulfur protein as acceptor"/>
    <property type="evidence" value="ECO:0007669"/>
    <property type="project" value="UniProtKB-UniRule"/>
</dbReference>
<dbReference type="GO" id="GO:0036068">
    <property type="term" value="P:light-independent chlorophyll biosynthetic process"/>
    <property type="evidence" value="ECO:0007669"/>
    <property type="project" value="UniProtKB-UniRule"/>
</dbReference>
<dbReference type="GO" id="GO:0019685">
    <property type="term" value="P:photosynthesis, dark reaction"/>
    <property type="evidence" value="ECO:0007669"/>
    <property type="project" value="InterPro"/>
</dbReference>
<dbReference type="CDD" id="cd02032">
    <property type="entry name" value="Bchl-like"/>
    <property type="match status" value="1"/>
</dbReference>
<dbReference type="Gene3D" id="3.40.50.300">
    <property type="entry name" value="P-loop containing nucleotide triphosphate hydrolases"/>
    <property type="match status" value="1"/>
</dbReference>
<dbReference type="HAMAP" id="MF_00355">
    <property type="entry name" value="ChlL_BchL"/>
    <property type="match status" value="1"/>
</dbReference>
<dbReference type="InterPro" id="IPR030655">
    <property type="entry name" value="NifH/chlL_CS"/>
</dbReference>
<dbReference type="InterPro" id="IPR000392">
    <property type="entry name" value="NifH/frxC"/>
</dbReference>
<dbReference type="InterPro" id="IPR027417">
    <property type="entry name" value="P-loop_NTPase"/>
</dbReference>
<dbReference type="InterPro" id="IPR005971">
    <property type="entry name" value="Protochlorophyllide_ATP-bd"/>
</dbReference>
<dbReference type="NCBIfam" id="TIGR01281">
    <property type="entry name" value="DPOR_bchL"/>
    <property type="match status" value="1"/>
</dbReference>
<dbReference type="PANTHER" id="PTHR42864">
    <property type="entry name" value="LIGHT-INDEPENDENT PROTOCHLOROPHYLLIDE REDUCTASE IRON-SULFUR ATP-BINDING PROTEIN"/>
    <property type="match status" value="1"/>
</dbReference>
<dbReference type="PANTHER" id="PTHR42864:SF2">
    <property type="entry name" value="LIGHT-INDEPENDENT PROTOCHLOROPHYLLIDE REDUCTASE IRON-SULFUR ATP-BINDING PROTEIN"/>
    <property type="match status" value="1"/>
</dbReference>
<dbReference type="Pfam" id="PF00142">
    <property type="entry name" value="Fer4_NifH"/>
    <property type="match status" value="1"/>
</dbReference>
<dbReference type="PIRSF" id="PIRSF000363">
    <property type="entry name" value="Nitrogenase_iron"/>
    <property type="match status" value="1"/>
</dbReference>
<dbReference type="PRINTS" id="PR00091">
    <property type="entry name" value="NITROGNASEII"/>
</dbReference>
<dbReference type="SUPFAM" id="SSF52540">
    <property type="entry name" value="P-loop containing nucleoside triphosphate hydrolases"/>
    <property type="match status" value="1"/>
</dbReference>
<dbReference type="PROSITE" id="PS00746">
    <property type="entry name" value="NIFH_FRXC_1"/>
    <property type="match status" value="1"/>
</dbReference>
<dbReference type="PROSITE" id="PS00692">
    <property type="entry name" value="NIFH_FRXC_2"/>
    <property type="match status" value="1"/>
</dbReference>
<dbReference type="PROSITE" id="PS51026">
    <property type="entry name" value="NIFH_FRXC_3"/>
    <property type="match status" value="1"/>
</dbReference>
<gene>
    <name evidence="1" type="primary">chlL</name>
</gene>
<organism>
    <name type="scientific">Pyropia yezoensis</name>
    <name type="common">Susabi-nori</name>
    <name type="synonym">Porphyra yezoensis</name>
    <dbReference type="NCBI Taxonomy" id="2788"/>
    <lineage>
        <taxon>Eukaryota</taxon>
        <taxon>Rhodophyta</taxon>
        <taxon>Bangiophyceae</taxon>
        <taxon>Bangiales</taxon>
        <taxon>Bangiaceae</taxon>
        <taxon>Pyropia</taxon>
    </lineage>
</organism>
<sequence>MKLAVYGKGGIGKSTTSCNISVALSKRGKKVLQIGCDPKHDSTFTLTGFLIPTIIDTLQSKDYHYEDVWPEDVIYKGYGGVDCVEAGGPPAGAGCGGYVVGETVKLLKELNAFDEYDIILFDVLGDVVCGGFAAPLNYADYCLIITDNGFDALFAANRIAASVREKARTHSLRLAGLVGNRTDKRDLIDKYIDCVPMPVLEVLPLIEDIRVSRVKGKTLFEMAEIDKDLAYVCDYYLNIADQLITRPEGVVPKESPDRELFSLLSDFYLNPKSKVGQEKVDQEELDLMIV</sequence>
<reference key="1">
    <citation type="submission" date="2003-11" db="EMBL/GenBank/DDBJ databases">
        <title>Whole genome sequence of Porphyra yezoensis chloroplast.</title>
        <authorList>
            <person name="Kunimoto M."/>
            <person name="Morishima K."/>
            <person name="Yoshikawa M."/>
            <person name="Fukuda S."/>
            <person name="Kobayashi T."/>
            <person name="Kobayashi M."/>
            <person name="Okazaki T."/>
            <person name="Ohara I."/>
            <person name="Nakayama I."/>
        </authorList>
    </citation>
    <scope>NUCLEOTIDE SEQUENCE [LARGE SCALE GENOMIC DNA]</scope>
    <source>
        <strain>U-51</strain>
    </source>
</reference>
<proteinExistence type="inferred from homology"/>
<protein>
    <recommendedName>
        <fullName evidence="1">Light-independent protochlorophyllide reductase iron-sulfur ATP-binding protein</fullName>
        <shortName evidence="1">DPOR subunit L</shortName>
        <shortName evidence="1">LI-POR subunit L</shortName>
        <ecNumber evidence="1">1.3.7.7</ecNumber>
    </recommendedName>
</protein>
<evidence type="ECO:0000255" key="1">
    <source>
        <dbReference type="HAMAP-Rule" id="MF_00355"/>
    </source>
</evidence>
<comment type="function">
    <text evidence="1">Component of the dark-operative protochlorophyllide reductase (DPOR) that uses Mg-ATP and reduced ferredoxin to reduce ring D of protochlorophyllide (Pchlide) to form chlorophyllide a (Chlide). This reaction is light-independent. The L component serves as a unique electron donor to the NB-component of the complex, and binds Mg-ATP.</text>
</comment>
<comment type="catalytic activity">
    <reaction evidence="1">
        <text>chlorophyllide a + oxidized 2[4Fe-4S]-[ferredoxin] + 2 ADP + 2 phosphate = protochlorophyllide a + reduced 2[4Fe-4S]-[ferredoxin] + 2 ATP + 2 H2O</text>
        <dbReference type="Rhea" id="RHEA:28202"/>
        <dbReference type="Rhea" id="RHEA-COMP:10002"/>
        <dbReference type="Rhea" id="RHEA-COMP:10004"/>
        <dbReference type="ChEBI" id="CHEBI:15377"/>
        <dbReference type="ChEBI" id="CHEBI:30616"/>
        <dbReference type="ChEBI" id="CHEBI:33722"/>
        <dbReference type="ChEBI" id="CHEBI:33723"/>
        <dbReference type="ChEBI" id="CHEBI:43474"/>
        <dbReference type="ChEBI" id="CHEBI:83348"/>
        <dbReference type="ChEBI" id="CHEBI:83350"/>
        <dbReference type="ChEBI" id="CHEBI:456216"/>
        <dbReference type="EC" id="1.3.7.7"/>
    </reaction>
</comment>
<comment type="cofactor">
    <cofactor evidence="1">
        <name>[4Fe-4S] cluster</name>
        <dbReference type="ChEBI" id="CHEBI:49883"/>
    </cofactor>
    <text evidence="1">Binds 1 [4Fe-4S] cluster per dimer.</text>
</comment>
<comment type="pathway">
    <text evidence="1">Porphyrin-containing compound metabolism; chlorophyll biosynthesis (light-independent).</text>
</comment>
<comment type="subunit">
    <text evidence="1">Homodimer. Protochlorophyllide reductase is composed of three subunits; ChlL, ChlN and ChlB.</text>
</comment>
<comment type="subcellular location">
    <subcellularLocation>
        <location>Plastid</location>
        <location>Chloroplast</location>
    </subcellularLocation>
</comment>
<comment type="similarity">
    <text evidence="1">Belongs to the NifH/BchL/ChlL family.</text>
</comment>